<sequence>MSPEKQPQEEDEVDSVLLSASKILNSSEGVKESGCSGTEYGCIAESENQIQPQSALKVLQHQLESFQALRMQTLQNVSMVQSEISEILNKSIIEVENPQFGSEKNLAFGARIEKDLPTENQEGNLSMEKSRHFKDSKTLHSVEEKLSGDSVNSLSQNINVPSQMHFEDTLTLRTSTDNLSSNIIIHPSENSDILKNYNNFYHFLPTAPQNVMSQADTVILDKSKITVPFLKHGFCENLDDICHSIEQMKEELQKSHDREVALANELQTLKTDPNVQSNDKYDLSPIHQEKMNFIKEENMDGNLNEDIKSKRISELEALVNKLLPFRETVSKFHVNFCRKCKKLSKSEIHRGKRNEKNNKEIPITGKNITDLKFHSRVPRYTLSFLDQTKHEMKDKERQPFLVKQGSIIFENEKTSKVNSVTEQCVAKIQYLQNYLKESVQIQKKVTELENENLNLKSKMKPLIFTTQSLIQKVETYEKQLKNLVEEKSTIQSKLSKTEEDSKECLKELKKIIGKYNVLQGQNKTLEEKNIQLSLEKQQMMEAFDQLKSKEHKTQSDMAIVNNENNLMSIEMEAMKTNILLIQDEKEMLEKKTHQLLKEKSSLENELKENQLEVMQLKEKERLAKTEQETLLQIIETVKDEKLNLETTLQESAAARQIMEREIENIQTYQSTAEENFLQEIKNAKSEASIYKNSLSEIGKECEMLSKMVMETKTDNQILKEELKKHSQENVKFENSISRLTEDKILLENYVRSIENERDTLEFEMRNLQREYLNLSDKICSQHNDPSKSTYISRREKFHFDNYIHEDISSPRSRPLASDLKGYLKVKDRTLKHH</sequence>
<comment type="subcellular location">
    <subcellularLocation>
        <location evidence="1">Nucleus</location>
    </subcellularLocation>
</comment>
<comment type="alternative products">
    <event type="alternative splicing"/>
    <isoform>
        <id>Q95JS9-1</id>
        <name>1</name>
        <sequence type="displayed"/>
    </isoform>
    <isoform>
        <id>Q95JS9-2</id>
        <name>2</name>
        <sequence type="described" ref="VSP_020366"/>
    </isoform>
</comment>
<evidence type="ECO:0000250" key="1"/>
<evidence type="ECO:0000255" key="2"/>
<evidence type="ECO:0000303" key="3">
    <source>
    </source>
</evidence>
<evidence type="ECO:0000305" key="4"/>
<accession>Q95JS9</accession>
<accession>Q95K11</accession>
<proteinExistence type="evidence at transcript level"/>
<reference key="1">
    <citation type="journal article" date="2002" name="BMC Genomics">
        <title>Cynomolgus monkey testicular cDNAs for discovery of novel human genes in the human genome sequence.</title>
        <authorList>
            <person name="Osada N."/>
            <person name="Hida M."/>
            <person name="Kusuda J."/>
            <person name="Tanuma R."/>
            <person name="Hirata M."/>
            <person name="Suto Y."/>
            <person name="Hirai M."/>
            <person name="Terao K."/>
            <person name="Sugano S."/>
            <person name="Hashimoto K."/>
        </authorList>
    </citation>
    <scope>NUCLEOTIDE SEQUENCE [LARGE SCALE MRNA] (ISOFORMS 1 AND 2)</scope>
    <source>
        <tissue>Testis</tissue>
    </source>
</reference>
<name>CC110_MACFA</name>
<organism>
    <name type="scientific">Macaca fascicularis</name>
    <name type="common">Crab-eating macaque</name>
    <name type="synonym">Cynomolgus monkey</name>
    <dbReference type="NCBI Taxonomy" id="9541"/>
    <lineage>
        <taxon>Eukaryota</taxon>
        <taxon>Metazoa</taxon>
        <taxon>Chordata</taxon>
        <taxon>Craniata</taxon>
        <taxon>Vertebrata</taxon>
        <taxon>Euteleostomi</taxon>
        <taxon>Mammalia</taxon>
        <taxon>Eutheria</taxon>
        <taxon>Euarchontoglires</taxon>
        <taxon>Primates</taxon>
        <taxon>Haplorrhini</taxon>
        <taxon>Catarrhini</taxon>
        <taxon>Cercopithecidae</taxon>
        <taxon>Cercopithecinae</taxon>
        <taxon>Macaca</taxon>
    </lineage>
</organism>
<feature type="chain" id="PRO_0000249077" description="Coiled-coil domain-containing protein 110">
    <location>
        <begin position="1"/>
        <end position="833"/>
    </location>
</feature>
<feature type="coiled-coil region" evidence="2">
    <location>
        <begin position="431"/>
        <end position="778"/>
    </location>
</feature>
<feature type="splice variant" id="VSP_020366" description="In isoform 2." evidence="3">
    <original>YLKVKDRTLKHH</original>
    <variation>IPSKLYQLLPSKIYK</variation>
    <location>
        <begin position="822"/>
        <end position="833"/>
    </location>
</feature>
<feature type="sequence conflict" description="In Ref. 1; BAB62961." evidence="4" ref="1">
    <original>E</original>
    <variation>G</variation>
    <location>
        <position position="563"/>
    </location>
</feature>
<feature type="sequence conflict" description="In Ref. 1; BAB63045." evidence="4" ref="1">
    <original>K</original>
    <variation>E</variation>
    <location>
        <position position="699"/>
    </location>
</feature>
<keyword id="KW-0025">Alternative splicing</keyword>
<keyword id="KW-0175">Coiled coil</keyword>
<keyword id="KW-0539">Nucleus</keyword>
<keyword id="KW-1185">Reference proteome</keyword>
<gene>
    <name type="primary">CCDC110</name>
    <name type="ORF">QtsA-11294</name>
    <name type="ORF">QtsA-13715</name>
</gene>
<dbReference type="EMBL" id="AB070016">
    <property type="protein sequence ID" value="BAB62961.1"/>
    <property type="molecule type" value="mRNA"/>
</dbReference>
<dbReference type="EMBL" id="AB070100">
    <property type="protein sequence ID" value="BAB63045.1"/>
    <property type="molecule type" value="mRNA"/>
</dbReference>
<dbReference type="SMR" id="Q95JS9"/>
<dbReference type="eggNOG" id="ENOG502QR3F">
    <property type="taxonomic scope" value="Eukaryota"/>
</dbReference>
<dbReference type="Proteomes" id="UP000233100">
    <property type="component" value="Unplaced"/>
</dbReference>
<dbReference type="GO" id="GO:0005856">
    <property type="term" value="C:cytoskeleton"/>
    <property type="evidence" value="ECO:0007669"/>
    <property type="project" value="TreeGrafter"/>
</dbReference>
<dbReference type="GO" id="GO:0005634">
    <property type="term" value="C:nucleus"/>
    <property type="evidence" value="ECO:0007669"/>
    <property type="project" value="UniProtKB-SubCell"/>
</dbReference>
<dbReference type="PANTHER" id="PTHR32083">
    <property type="entry name" value="CILIA AND FLAGELLA-ASSOCIATED PROTEIN 58-RELATED"/>
    <property type="match status" value="1"/>
</dbReference>
<dbReference type="PANTHER" id="PTHR32083:SF32">
    <property type="entry name" value="COILED-COIL DOMAIN-CONTAINING PROTEIN 110"/>
    <property type="match status" value="1"/>
</dbReference>
<protein>
    <recommendedName>
        <fullName>Coiled-coil domain-containing protein 110</fullName>
    </recommendedName>
</protein>